<gene>
    <name evidence="1" type="primary">xseA</name>
    <name type="ordered locus">MSC_0101</name>
</gene>
<evidence type="ECO:0000255" key="1">
    <source>
        <dbReference type="HAMAP-Rule" id="MF_00378"/>
    </source>
</evidence>
<dbReference type="EC" id="3.1.11.6" evidence="1"/>
<dbReference type="EMBL" id="BX293980">
    <property type="protein sequence ID" value="CAE76753.1"/>
    <property type="molecule type" value="Genomic_DNA"/>
</dbReference>
<dbReference type="RefSeq" id="NP_975111.1">
    <property type="nucleotide sequence ID" value="NC_005364.2"/>
</dbReference>
<dbReference type="RefSeq" id="WP_011166310.1">
    <property type="nucleotide sequence ID" value="NC_005364.2"/>
</dbReference>
<dbReference type="SMR" id="Q6MUD1"/>
<dbReference type="STRING" id="272632.MSC_0101"/>
<dbReference type="KEGG" id="mmy:MSC_0101"/>
<dbReference type="PATRIC" id="fig|272632.4.peg.105"/>
<dbReference type="eggNOG" id="COG1570">
    <property type="taxonomic scope" value="Bacteria"/>
</dbReference>
<dbReference type="HOGENOM" id="CLU_023625_3_1_14"/>
<dbReference type="Proteomes" id="UP000001016">
    <property type="component" value="Chromosome"/>
</dbReference>
<dbReference type="GO" id="GO:0005737">
    <property type="term" value="C:cytoplasm"/>
    <property type="evidence" value="ECO:0007669"/>
    <property type="project" value="UniProtKB-SubCell"/>
</dbReference>
<dbReference type="GO" id="GO:0009318">
    <property type="term" value="C:exodeoxyribonuclease VII complex"/>
    <property type="evidence" value="ECO:0007669"/>
    <property type="project" value="InterPro"/>
</dbReference>
<dbReference type="GO" id="GO:0008855">
    <property type="term" value="F:exodeoxyribonuclease VII activity"/>
    <property type="evidence" value="ECO:0007669"/>
    <property type="project" value="UniProtKB-UniRule"/>
</dbReference>
<dbReference type="GO" id="GO:0003676">
    <property type="term" value="F:nucleic acid binding"/>
    <property type="evidence" value="ECO:0007669"/>
    <property type="project" value="InterPro"/>
</dbReference>
<dbReference type="GO" id="GO:0006308">
    <property type="term" value="P:DNA catabolic process"/>
    <property type="evidence" value="ECO:0007669"/>
    <property type="project" value="UniProtKB-UniRule"/>
</dbReference>
<dbReference type="CDD" id="cd04489">
    <property type="entry name" value="ExoVII_LU_OBF"/>
    <property type="match status" value="1"/>
</dbReference>
<dbReference type="HAMAP" id="MF_00378">
    <property type="entry name" value="Exonuc_7_L"/>
    <property type="match status" value="1"/>
</dbReference>
<dbReference type="InterPro" id="IPR003753">
    <property type="entry name" value="Exonuc_VII_L"/>
</dbReference>
<dbReference type="InterPro" id="IPR020579">
    <property type="entry name" value="Exonuc_VII_lsu_C"/>
</dbReference>
<dbReference type="InterPro" id="IPR025824">
    <property type="entry name" value="OB-fold_nuc-bd_dom"/>
</dbReference>
<dbReference type="NCBIfam" id="TIGR00237">
    <property type="entry name" value="xseA"/>
    <property type="match status" value="1"/>
</dbReference>
<dbReference type="PANTHER" id="PTHR30008">
    <property type="entry name" value="EXODEOXYRIBONUCLEASE 7 LARGE SUBUNIT"/>
    <property type="match status" value="1"/>
</dbReference>
<dbReference type="PANTHER" id="PTHR30008:SF0">
    <property type="entry name" value="EXODEOXYRIBONUCLEASE 7 LARGE SUBUNIT"/>
    <property type="match status" value="1"/>
</dbReference>
<dbReference type="Pfam" id="PF02601">
    <property type="entry name" value="Exonuc_VII_L"/>
    <property type="match status" value="1"/>
</dbReference>
<dbReference type="Pfam" id="PF13742">
    <property type="entry name" value="tRNA_anti_2"/>
    <property type="match status" value="1"/>
</dbReference>
<keyword id="KW-0963">Cytoplasm</keyword>
<keyword id="KW-0269">Exonuclease</keyword>
<keyword id="KW-0378">Hydrolase</keyword>
<keyword id="KW-0540">Nuclease</keyword>
<keyword id="KW-1185">Reference proteome</keyword>
<comment type="function">
    <text evidence="1">Bidirectionally degrades single-stranded DNA into large acid-insoluble oligonucleotides, which are then degraded further into small acid-soluble oligonucleotides.</text>
</comment>
<comment type="catalytic activity">
    <reaction evidence="1">
        <text>Exonucleolytic cleavage in either 5'- to 3'- or 3'- to 5'-direction to yield nucleoside 5'-phosphates.</text>
        <dbReference type="EC" id="3.1.11.6"/>
    </reaction>
</comment>
<comment type="subunit">
    <text evidence="1">Heterooligomer composed of large and small subunits.</text>
</comment>
<comment type="subcellular location">
    <subcellularLocation>
        <location evidence="1">Cytoplasm</location>
    </subcellularLocation>
</comment>
<comment type="similarity">
    <text evidence="1">Belongs to the XseA family.</text>
</comment>
<accession>Q6MUD1</accession>
<name>EX7L_MYCMS</name>
<reference key="1">
    <citation type="journal article" date="2004" name="Genome Res.">
        <title>The genome sequence of Mycoplasma mycoides subsp. mycoides SC type strain PG1T, the causative agent of contagious bovine pleuropneumonia (CBPP).</title>
        <authorList>
            <person name="Westberg J."/>
            <person name="Persson A."/>
            <person name="Holmberg A."/>
            <person name="Goesmann A."/>
            <person name="Lundeberg J."/>
            <person name="Johansson K.-E."/>
            <person name="Pettersson B."/>
            <person name="Uhlen M."/>
        </authorList>
    </citation>
    <scope>NUCLEOTIDE SEQUENCE [LARGE SCALE GENOMIC DNA]</scope>
    <source>
        <strain>CCUG 32753 / NCTC 10114 / PG1</strain>
    </source>
</reference>
<proteinExistence type="inferred from homology"/>
<organism>
    <name type="scientific">Mycoplasma mycoides subsp. mycoides SC (strain CCUG 32753 / NCTC 10114 / PG1)</name>
    <dbReference type="NCBI Taxonomy" id="272632"/>
    <lineage>
        <taxon>Bacteria</taxon>
        <taxon>Bacillati</taxon>
        <taxon>Mycoplasmatota</taxon>
        <taxon>Mollicutes</taxon>
        <taxon>Mycoplasmataceae</taxon>
        <taxon>Mycoplasma</taxon>
    </lineage>
</organism>
<sequence length="469" mass="54427">MEKILTVQELNEALKTLIENKQEFKDIYVQGELSNLTFNKSGHIYFSIKEQDAAINCMMWKTNAYKIQSLNLEDGMQIICYGRLTYYIPTGRVSFEVRDIQIHGIGDLQKIFEQRYKELEQKGWFDPNLKKSIPEFVKNVGIITADSGAAIYDLIRTVHRRLPLINIYLFPAQVQGDKAEIDITNKIKQANNFKIDLDVLIVGRGGGSYEDLWAFNELEVLQAIKNSHIPIISAVGHEPDWVLSDYVADIRAATPTAAGELVSKSIIEIKNQLKHYYQNYKTLILNKLDFFNEKINNYKKDQTKYIKDNFSFKYLQLKQLSIDNTKWTKNKIDSVIYKLEDYKHSINNSIIHIINSQNKALKNYLIADEQKILNYLKKQISEFNYTISSFKGHINQILKYEELSFDTLENKLNSLDPLKPLQNGYSIVTNLNHQKIRSYKQVKLNEDLKVILTDSKLTVTIKEVKTNEQ</sequence>
<feature type="chain" id="PRO_1000200674" description="Exodeoxyribonuclease 7 large subunit">
    <location>
        <begin position="1"/>
        <end position="469"/>
    </location>
</feature>
<protein>
    <recommendedName>
        <fullName evidence="1">Exodeoxyribonuclease 7 large subunit</fullName>
        <ecNumber evidence="1">3.1.11.6</ecNumber>
    </recommendedName>
    <alternativeName>
        <fullName evidence="1">Exodeoxyribonuclease VII large subunit</fullName>
        <shortName evidence="1">Exonuclease VII large subunit</shortName>
    </alternativeName>
</protein>